<evidence type="ECO:0000255" key="1">
    <source>
        <dbReference type="HAMAP-Rule" id="MF_00360"/>
    </source>
</evidence>
<evidence type="ECO:0000305" key="2"/>
<sequence>MRHYELMVILDPSLDERTVAPSLDTFLNVVRQDGGKIDKVDVWGKRRLAYEILKHSEGIYAVIDISATPATVAELDRQLGLNESVLRTKVLRHNK</sequence>
<comment type="function">
    <text evidence="1">Binds together with bS18 to 16S ribosomal RNA.</text>
</comment>
<comment type="similarity">
    <text evidence="1">Belongs to the bacterial ribosomal protein bS6 family.</text>
</comment>
<proteinExistence type="inferred from homology"/>
<dbReference type="EMBL" id="AP011115">
    <property type="protein sequence ID" value="BAH51472.1"/>
    <property type="molecule type" value="Genomic_DNA"/>
</dbReference>
<dbReference type="RefSeq" id="WP_005249677.1">
    <property type="nucleotide sequence ID" value="NC_012522.1"/>
</dbReference>
<dbReference type="SMR" id="C1B719"/>
<dbReference type="STRING" id="632772.ROP_32250"/>
<dbReference type="GeneID" id="69895223"/>
<dbReference type="KEGG" id="rop:ROP_32250"/>
<dbReference type="PATRIC" id="fig|632772.20.peg.3381"/>
<dbReference type="HOGENOM" id="CLU_113441_5_3_11"/>
<dbReference type="OrthoDB" id="9812702at2"/>
<dbReference type="Proteomes" id="UP000002212">
    <property type="component" value="Chromosome"/>
</dbReference>
<dbReference type="GO" id="GO:0005737">
    <property type="term" value="C:cytoplasm"/>
    <property type="evidence" value="ECO:0007669"/>
    <property type="project" value="UniProtKB-ARBA"/>
</dbReference>
<dbReference type="GO" id="GO:1990904">
    <property type="term" value="C:ribonucleoprotein complex"/>
    <property type="evidence" value="ECO:0007669"/>
    <property type="project" value="UniProtKB-KW"/>
</dbReference>
<dbReference type="GO" id="GO:0005840">
    <property type="term" value="C:ribosome"/>
    <property type="evidence" value="ECO:0007669"/>
    <property type="project" value="UniProtKB-KW"/>
</dbReference>
<dbReference type="GO" id="GO:0070181">
    <property type="term" value="F:small ribosomal subunit rRNA binding"/>
    <property type="evidence" value="ECO:0007669"/>
    <property type="project" value="TreeGrafter"/>
</dbReference>
<dbReference type="GO" id="GO:0003735">
    <property type="term" value="F:structural constituent of ribosome"/>
    <property type="evidence" value="ECO:0007669"/>
    <property type="project" value="InterPro"/>
</dbReference>
<dbReference type="GO" id="GO:0006412">
    <property type="term" value="P:translation"/>
    <property type="evidence" value="ECO:0007669"/>
    <property type="project" value="UniProtKB-UniRule"/>
</dbReference>
<dbReference type="CDD" id="cd00473">
    <property type="entry name" value="bS6"/>
    <property type="match status" value="1"/>
</dbReference>
<dbReference type="FunFam" id="3.30.70.60:FF:000002">
    <property type="entry name" value="30S ribosomal protein S6"/>
    <property type="match status" value="1"/>
</dbReference>
<dbReference type="Gene3D" id="3.30.70.60">
    <property type="match status" value="1"/>
</dbReference>
<dbReference type="HAMAP" id="MF_00360">
    <property type="entry name" value="Ribosomal_bS6"/>
    <property type="match status" value="1"/>
</dbReference>
<dbReference type="InterPro" id="IPR000529">
    <property type="entry name" value="Ribosomal_bS6"/>
</dbReference>
<dbReference type="InterPro" id="IPR035980">
    <property type="entry name" value="Ribosomal_bS6_sf"/>
</dbReference>
<dbReference type="InterPro" id="IPR020814">
    <property type="entry name" value="Ribosomal_S6_plastid/chlpt"/>
</dbReference>
<dbReference type="InterPro" id="IPR014717">
    <property type="entry name" value="Transl_elong_EF1B/ribsomal_bS6"/>
</dbReference>
<dbReference type="NCBIfam" id="TIGR00166">
    <property type="entry name" value="S6"/>
    <property type="match status" value="1"/>
</dbReference>
<dbReference type="PANTHER" id="PTHR21011">
    <property type="entry name" value="MITOCHONDRIAL 28S RIBOSOMAL PROTEIN S6"/>
    <property type="match status" value="1"/>
</dbReference>
<dbReference type="PANTHER" id="PTHR21011:SF1">
    <property type="entry name" value="SMALL RIBOSOMAL SUBUNIT PROTEIN BS6M"/>
    <property type="match status" value="1"/>
</dbReference>
<dbReference type="Pfam" id="PF01250">
    <property type="entry name" value="Ribosomal_S6"/>
    <property type="match status" value="1"/>
</dbReference>
<dbReference type="SUPFAM" id="SSF54995">
    <property type="entry name" value="Ribosomal protein S6"/>
    <property type="match status" value="1"/>
</dbReference>
<reference key="1">
    <citation type="submission" date="2009-03" db="EMBL/GenBank/DDBJ databases">
        <title>Comparison of the complete genome sequences of Rhodococcus erythropolis PR4 and Rhodococcus opacus B4.</title>
        <authorList>
            <person name="Takarada H."/>
            <person name="Sekine M."/>
            <person name="Hosoyama A."/>
            <person name="Yamada R."/>
            <person name="Fujisawa T."/>
            <person name="Omata S."/>
            <person name="Shimizu A."/>
            <person name="Tsukatani N."/>
            <person name="Tanikawa S."/>
            <person name="Fujita N."/>
            <person name="Harayama S."/>
        </authorList>
    </citation>
    <scope>NUCLEOTIDE SEQUENCE [LARGE SCALE GENOMIC DNA]</scope>
    <source>
        <strain>B4</strain>
    </source>
</reference>
<protein>
    <recommendedName>
        <fullName evidence="1">Small ribosomal subunit protein bS6</fullName>
    </recommendedName>
    <alternativeName>
        <fullName evidence="2">30S ribosomal protein S6</fullName>
    </alternativeName>
</protein>
<accession>C1B719</accession>
<name>RS6_RHOOB</name>
<keyword id="KW-0687">Ribonucleoprotein</keyword>
<keyword id="KW-0689">Ribosomal protein</keyword>
<keyword id="KW-0694">RNA-binding</keyword>
<keyword id="KW-0699">rRNA-binding</keyword>
<gene>
    <name evidence="1" type="primary">rpsF</name>
    <name type="ordered locus">ROP_32250</name>
</gene>
<feature type="chain" id="PRO_1000133540" description="Small ribosomal subunit protein bS6">
    <location>
        <begin position="1"/>
        <end position="95"/>
    </location>
</feature>
<organism>
    <name type="scientific">Rhodococcus opacus (strain B4)</name>
    <dbReference type="NCBI Taxonomy" id="632772"/>
    <lineage>
        <taxon>Bacteria</taxon>
        <taxon>Bacillati</taxon>
        <taxon>Actinomycetota</taxon>
        <taxon>Actinomycetes</taxon>
        <taxon>Mycobacteriales</taxon>
        <taxon>Nocardiaceae</taxon>
        <taxon>Rhodococcus</taxon>
    </lineage>
</organism>